<keyword id="KW-0067">ATP-binding</keyword>
<keyword id="KW-0418">Kinase</keyword>
<keyword id="KW-0460">Magnesium</keyword>
<keyword id="KW-0479">Metal-binding</keyword>
<keyword id="KW-0547">Nucleotide-binding</keyword>
<keyword id="KW-1185">Reference proteome</keyword>
<keyword id="KW-0711">Selenium</keyword>
<keyword id="KW-0712">Selenocysteine</keyword>
<keyword id="KW-0808">Transferase</keyword>
<proteinExistence type="inferred from homology"/>
<name>SELD_CALS4</name>
<accession>Q8R8W3</accession>
<evidence type="ECO:0000255" key="1"/>
<evidence type="ECO:0000255" key="2">
    <source>
        <dbReference type="HAMAP-Rule" id="MF_00625"/>
    </source>
</evidence>
<evidence type="ECO:0000305" key="3"/>
<comment type="function">
    <text evidence="2">Synthesizes selenophosphate from selenide and ATP.</text>
</comment>
<comment type="catalytic activity">
    <reaction evidence="2">
        <text>hydrogenselenide + ATP + H2O = selenophosphate + AMP + phosphate + 2 H(+)</text>
        <dbReference type="Rhea" id="RHEA:18737"/>
        <dbReference type="ChEBI" id="CHEBI:15377"/>
        <dbReference type="ChEBI" id="CHEBI:15378"/>
        <dbReference type="ChEBI" id="CHEBI:16144"/>
        <dbReference type="ChEBI" id="CHEBI:29317"/>
        <dbReference type="ChEBI" id="CHEBI:30616"/>
        <dbReference type="ChEBI" id="CHEBI:43474"/>
        <dbReference type="ChEBI" id="CHEBI:456215"/>
        <dbReference type="EC" id="2.7.9.3"/>
    </reaction>
</comment>
<comment type="cofactor">
    <cofactor evidence="2">
        <name>Mg(2+)</name>
        <dbReference type="ChEBI" id="CHEBI:18420"/>
    </cofactor>
    <text evidence="2">Binds 1 Mg(2+) ion per monomer.</text>
</comment>
<comment type="subunit">
    <text evidence="2">Homodimer.</text>
</comment>
<comment type="similarity">
    <text evidence="2">Belongs to the selenophosphate synthase 1 family. Class I subfamily.</text>
</comment>
<comment type="sequence caution" evidence="3">
    <conflict type="erroneous termination">
        <sequence resource="EMBL-CDS" id="AAM25060"/>
    </conflict>
    <text>Truncated C-terminus.</text>
</comment>
<organism>
    <name type="scientific">Caldanaerobacter subterraneus subsp. tengcongensis (strain DSM 15242 / JCM 11007 / NBRC 100824 / MB4)</name>
    <name type="common">Thermoanaerobacter tengcongensis</name>
    <dbReference type="NCBI Taxonomy" id="273068"/>
    <lineage>
        <taxon>Bacteria</taxon>
        <taxon>Bacillati</taxon>
        <taxon>Bacillota</taxon>
        <taxon>Clostridia</taxon>
        <taxon>Thermoanaerobacterales</taxon>
        <taxon>Thermoanaerobacteraceae</taxon>
        <taxon>Caldanaerobacter</taxon>
    </lineage>
</organism>
<dbReference type="EC" id="2.7.9.3" evidence="2"/>
<dbReference type="EMBL" id="AE008691">
    <property type="protein sequence ID" value="AAM25060.1"/>
    <property type="status" value="ALT_SEQ"/>
    <property type="molecule type" value="Genomic_DNA"/>
</dbReference>
<dbReference type="RefSeq" id="WP_081427416.1">
    <property type="nucleotide sequence ID" value="NC_003869.1"/>
</dbReference>
<dbReference type="STRING" id="273068.TTE1873"/>
<dbReference type="KEGG" id="tte:TTE1873"/>
<dbReference type="eggNOG" id="COG0709">
    <property type="taxonomic scope" value="Bacteria"/>
</dbReference>
<dbReference type="HOGENOM" id="CLU_032859_0_1_9"/>
<dbReference type="OrthoDB" id="9772934at2"/>
<dbReference type="Proteomes" id="UP000000555">
    <property type="component" value="Chromosome"/>
</dbReference>
<dbReference type="GO" id="GO:0005737">
    <property type="term" value="C:cytoplasm"/>
    <property type="evidence" value="ECO:0007669"/>
    <property type="project" value="TreeGrafter"/>
</dbReference>
<dbReference type="GO" id="GO:0005524">
    <property type="term" value="F:ATP binding"/>
    <property type="evidence" value="ECO:0007669"/>
    <property type="project" value="UniProtKB-UniRule"/>
</dbReference>
<dbReference type="GO" id="GO:0000287">
    <property type="term" value="F:magnesium ion binding"/>
    <property type="evidence" value="ECO:0007669"/>
    <property type="project" value="UniProtKB-UniRule"/>
</dbReference>
<dbReference type="GO" id="GO:0004756">
    <property type="term" value="F:selenide, water dikinase activity"/>
    <property type="evidence" value="ECO:0007669"/>
    <property type="project" value="UniProtKB-UniRule"/>
</dbReference>
<dbReference type="GO" id="GO:0016260">
    <property type="term" value="P:selenocysteine biosynthetic process"/>
    <property type="evidence" value="ECO:0007669"/>
    <property type="project" value="InterPro"/>
</dbReference>
<dbReference type="CDD" id="cd02195">
    <property type="entry name" value="SelD"/>
    <property type="match status" value="1"/>
</dbReference>
<dbReference type="FunFam" id="3.30.1330.10:FF:000003">
    <property type="entry name" value="Selenide, water dikinase"/>
    <property type="match status" value="1"/>
</dbReference>
<dbReference type="FunFam" id="3.90.650.10:FF:000004">
    <property type="entry name" value="Selenide, water dikinase"/>
    <property type="match status" value="1"/>
</dbReference>
<dbReference type="Gene3D" id="3.90.650.10">
    <property type="entry name" value="PurM-like C-terminal domain"/>
    <property type="match status" value="1"/>
</dbReference>
<dbReference type="Gene3D" id="3.30.1330.10">
    <property type="entry name" value="PurM-like, N-terminal domain"/>
    <property type="match status" value="1"/>
</dbReference>
<dbReference type="HAMAP" id="MF_00625">
    <property type="entry name" value="SelD"/>
    <property type="match status" value="1"/>
</dbReference>
<dbReference type="InterPro" id="IPR010918">
    <property type="entry name" value="PurM-like_C_dom"/>
</dbReference>
<dbReference type="InterPro" id="IPR036676">
    <property type="entry name" value="PurM-like_C_sf"/>
</dbReference>
<dbReference type="InterPro" id="IPR016188">
    <property type="entry name" value="PurM-like_N"/>
</dbReference>
<dbReference type="InterPro" id="IPR036921">
    <property type="entry name" value="PurM-like_N_sf"/>
</dbReference>
<dbReference type="InterPro" id="IPR023061">
    <property type="entry name" value="SelD_I"/>
</dbReference>
<dbReference type="InterPro" id="IPR004536">
    <property type="entry name" value="SPS/SelD"/>
</dbReference>
<dbReference type="NCBIfam" id="NF002098">
    <property type="entry name" value="PRK00943.1"/>
    <property type="match status" value="1"/>
</dbReference>
<dbReference type="NCBIfam" id="TIGR00476">
    <property type="entry name" value="selD"/>
    <property type="match status" value="1"/>
</dbReference>
<dbReference type="PANTHER" id="PTHR10256:SF0">
    <property type="entry name" value="INACTIVE SELENIDE, WATER DIKINASE-LIKE PROTEIN-RELATED"/>
    <property type="match status" value="1"/>
</dbReference>
<dbReference type="PANTHER" id="PTHR10256">
    <property type="entry name" value="SELENIDE, WATER DIKINASE"/>
    <property type="match status" value="1"/>
</dbReference>
<dbReference type="Pfam" id="PF00586">
    <property type="entry name" value="AIRS"/>
    <property type="match status" value="1"/>
</dbReference>
<dbReference type="Pfam" id="PF02769">
    <property type="entry name" value="AIRS_C"/>
    <property type="match status" value="1"/>
</dbReference>
<dbReference type="PIRSF" id="PIRSF036407">
    <property type="entry name" value="Selenphspht_syn"/>
    <property type="match status" value="1"/>
</dbReference>
<dbReference type="SUPFAM" id="SSF56042">
    <property type="entry name" value="PurM C-terminal domain-like"/>
    <property type="match status" value="1"/>
</dbReference>
<dbReference type="SUPFAM" id="SSF55326">
    <property type="entry name" value="PurM N-terminal domain-like"/>
    <property type="match status" value="1"/>
</dbReference>
<protein>
    <recommendedName>
        <fullName evidence="2">Selenide, water dikinase</fullName>
        <ecNumber evidence="2">2.7.9.3</ecNumber>
    </recommendedName>
    <alternativeName>
        <fullName evidence="2">Selenium donor protein</fullName>
    </alternativeName>
    <alternativeName>
        <fullName evidence="2">Selenophosphate synthase</fullName>
    </alternativeName>
</protein>
<gene>
    <name evidence="2" type="primary">selD</name>
    <name type="ordered locus">TTE1873</name>
</gene>
<sequence>MIEKIKLTQFTKSAGUAAKIGPEALAQVLCQLEITWNENLLVGLNTNDDAAVYRLNEDIAIVHTVDYFTPVVDDPYDFGQIAAANALSDVYAMGAVPLFALNVVCFPAAYIDVLKEVLRGGNDKVKEAGALIAGGHTIEDEEPKYGLSVTGIVHPEKVIKNSTAKPGDVLILTKPLGIGVINTAIKGEMCPSETYLLAVEVMKYLNKEASEIMKEVGVNACTDITGFGLLGHAYEMAFSSGVTIEFDKDSIPLIEGARELAQMGLIPGGCYRNKKYLKGKVCIKVEEDEVIDLMFDPQTSGGLLISVSEEKAEELYRRLNKKLKFGAFIVGRVKEKQEYDIYVR</sequence>
<reference key="1">
    <citation type="journal article" date="2002" name="Genome Res.">
        <title>A complete sequence of the T. tengcongensis genome.</title>
        <authorList>
            <person name="Bao Q."/>
            <person name="Tian Y."/>
            <person name="Li W."/>
            <person name="Xu Z."/>
            <person name="Xuan Z."/>
            <person name="Hu S."/>
            <person name="Dong W."/>
            <person name="Yang J."/>
            <person name="Chen Y."/>
            <person name="Xue Y."/>
            <person name="Xu Y."/>
            <person name="Lai X."/>
            <person name="Huang L."/>
            <person name="Dong X."/>
            <person name="Ma Y."/>
            <person name="Ling L."/>
            <person name="Tan H."/>
            <person name="Chen R."/>
            <person name="Wang J."/>
            <person name="Yu J."/>
            <person name="Yang H."/>
        </authorList>
    </citation>
    <scope>NUCLEOTIDE SEQUENCE [LARGE SCALE GENOMIC DNA]</scope>
    <source>
        <strain>DSM 15242 / JCM 11007 / NBRC 100824 / MB4</strain>
    </source>
</reference>
<feature type="chain" id="PRO_0000127641" description="Selenide, water dikinase">
    <location>
        <begin position="1"/>
        <end position="344"/>
    </location>
</feature>
<feature type="active site" evidence="2">
    <location>
        <position position="16"/>
    </location>
</feature>
<feature type="binding site" description="in other chain" evidence="2">
    <location>
        <position position="19"/>
    </location>
    <ligand>
        <name>ATP</name>
        <dbReference type="ChEBI" id="CHEBI:30616"/>
        <note>ligand shared between dimeric partners</note>
    </ligand>
</feature>
<feature type="binding site" description="in other chain" evidence="2">
    <location>
        <begin position="46"/>
        <end position="48"/>
    </location>
    <ligand>
        <name>ATP</name>
        <dbReference type="ChEBI" id="CHEBI:30616"/>
        <note>ligand shared between dimeric partners</note>
    </ligand>
</feature>
<feature type="binding site" evidence="2">
    <location>
        <position position="49"/>
    </location>
    <ligand>
        <name>Mg(2+)</name>
        <dbReference type="ChEBI" id="CHEBI:18420"/>
    </ligand>
</feature>
<feature type="binding site" description="in other chain" evidence="2">
    <location>
        <position position="66"/>
    </location>
    <ligand>
        <name>ATP</name>
        <dbReference type="ChEBI" id="CHEBI:30616"/>
        <note>ligand shared between dimeric partners</note>
    </ligand>
</feature>
<feature type="binding site" description="in other chain" evidence="2">
    <location>
        <position position="89"/>
    </location>
    <ligand>
        <name>ATP</name>
        <dbReference type="ChEBI" id="CHEBI:30616"/>
        <note>ligand shared between dimeric partners</note>
    </ligand>
</feature>
<feature type="binding site" evidence="2">
    <location>
        <position position="89"/>
    </location>
    <ligand>
        <name>Mg(2+)</name>
        <dbReference type="ChEBI" id="CHEBI:18420"/>
    </ligand>
</feature>
<feature type="binding site" evidence="2">
    <location>
        <begin position="135"/>
        <end position="137"/>
    </location>
    <ligand>
        <name>ATP</name>
        <dbReference type="ChEBI" id="CHEBI:30616"/>
        <note>ligand shared between dimeric partners</note>
    </ligand>
</feature>
<feature type="binding site" evidence="2">
    <location>
        <position position="223"/>
    </location>
    <ligand>
        <name>Mg(2+)</name>
        <dbReference type="ChEBI" id="CHEBI:18420"/>
    </ligand>
</feature>
<feature type="site" description="Important for catalytic activity" evidence="2">
    <location>
        <position position="19"/>
    </location>
</feature>
<feature type="non-standard amino acid" description="Selenocysteine" evidence="1">
    <location>
        <position position="16"/>
    </location>
</feature>